<protein>
    <recommendedName>
        <fullName evidence="1">Protein ApaG</fullName>
    </recommendedName>
</protein>
<sequence length="125" mass="13804">MSTAVTEGIEVTVRSTFRPERSEPGRFLFSYSVRVVNQGEAPAQLVSRHWIIVDANGEREEVVGDGVVGQQPHLEPGEHFEYTSFCVLKTPHGSMRGTYRMVRDDGQAFDATIAPFPLVVPGSLN</sequence>
<dbReference type="EMBL" id="CP000251">
    <property type="protein sequence ID" value="ABC83795.1"/>
    <property type="molecule type" value="Genomic_DNA"/>
</dbReference>
<dbReference type="RefSeq" id="WP_011423077.1">
    <property type="nucleotide sequence ID" value="NC_007760.1"/>
</dbReference>
<dbReference type="SMR" id="Q2IGT4"/>
<dbReference type="STRING" id="290397.Adeh_4031"/>
<dbReference type="KEGG" id="ade:Adeh_4031"/>
<dbReference type="eggNOG" id="COG2967">
    <property type="taxonomic scope" value="Bacteria"/>
</dbReference>
<dbReference type="HOGENOM" id="CLU_128074_1_0_7"/>
<dbReference type="OrthoDB" id="9795226at2"/>
<dbReference type="Proteomes" id="UP000001935">
    <property type="component" value="Chromosome"/>
</dbReference>
<dbReference type="Gene3D" id="2.60.40.1470">
    <property type="entry name" value="ApaG domain"/>
    <property type="match status" value="1"/>
</dbReference>
<dbReference type="HAMAP" id="MF_00791">
    <property type="entry name" value="ApaG"/>
    <property type="match status" value="1"/>
</dbReference>
<dbReference type="InterPro" id="IPR050718">
    <property type="entry name" value="ApaG-like"/>
</dbReference>
<dbReference type="InterPro" id="IPR007474">
    <property type="entry name" value="ApaG_domain"/>
</dbReference>
<dbReference type="InterPro" id="IPR036767">
    <property type="entry name" value="ApaG_sf"/>
</dbReference>
<dbReference type="InterPro" id="IPR023065">
    <property type="entry name" value="Uncharacterised_ApaG"/>
</dbReference>
<dbReference type="NCBIfam" id="NF003967">
    <property type="entry name" value="PRK05461.1"/>
    <property type="match status" value="1"/>
</dbReference>
<dbReference type="PANTHER" id="PTHR47191">
    <property type="entry name" value="OS05G0170800 PROTEIN"/>
    <property type="match status" value="1"/>
</dbReference>
<dbReference type="PANTHER" id="PTHR47191:SF2">
    <property type="entry name" value="OS05G0170800 PROTEIN"/>
    <property type="match status" value="1"/>
</dbReference>
<dbReference type="Pfam" id="PF04379">
    <property type="entry name" value="DUF525"/>
    <property type="match status" value="1"/>
</dbReference>
<dbReference type="SUPFAM" id="SSF110069">
    <property type="entry name" value="ApaG-like"/>
    <property type="match status" value="1"/>
</dbReference>
<dbReference type="PROSITE" id="PS51087">
    <property type="entry name" value="APAG"/>
    <property type="match status" value="1"/>
</dbReference>
<accession>Q2IGT4</accession>
<proteinExistence type="inferred from homology"/>
<feature type="chain" id="PRO_1000083603" description="Protein ApaG">
    <location>
        <begin position="1"/>
        <end position="125"/>
    </location>
</feature>
<feature type="domain" description="ApaG" evidence="1">
    <location>
        <begin position="3"/>
        <end position="125"/>
    </location>
</feature>
<evidence type="ECO:0000255" key="1">
    <source>
        <dbReference type="HAMAP-Rule" id="MF_00791"/>
    </source>
</evidence>
<keyword id="KW-1185">Reference proteome</keyword>
<gene>
    <name evidence="1" type="primary">apaG</name>
    <name type="ordered locus">Adeh_4031</name>
</gene>
<organism>
    <name type="scientific">Anaeromyxobacter dehalogenans (strain 2CP-C)</name>
    <dbReference type="NCBI Taxonomy" id="290397"/>
    <lineage>
        <taxon>Bacteria</taxon>
        <taxon>Pseudomonadati</taxon>
        <taxon>Myxococcota</taxon>
        <taxon>Myxococcia</taxon>
        <taxon>Myxococcales</taxon>
        <taxon>Cystobacterineae</taxon>
        <taxon>Anaeromyxobacteraceae</taxon>
        <taxon>Anaeromyxobacter</taxon>
    </lineage>
</organism>
<reference key="1">
    <citation type="submission" date="2006-01" db="EMBL/GenBank/DDBJ databases">
        <title>Complete sequence of Anaeromyxobacter dehalogenans 2CP-C.</title>
        <authorList>
            <person name="Copeland A."/>
            <person name="Lucas S."/>
            <person name="Lapidus A."/>
            <person name="Barry K."/>
            <person name="Detter J.C."/>
            <person name="Glavina T."/>
            <person name="Hammon N."/>
            <person name="Israni S."/>
            <person name="Pitluck S."/>
            <person name="Brettin T."/>
            <person name="Bruce D."/>
            <person name="Han C."/>
            <person name="Tapia R."/>
            <person name="Gilna P."/>
            <person name="Kiss H."/>
            <person name="Schmutz J."/>
            <person name="Larimer F."/>
            <person name="Land M."/>
            <person name="Kyrpides N."/>
            <person name="Anderson I."/>
            <person name="Sanford R.A."/>
            <person name="Ritalahti K.M."/>
            <person name="Thomas H.S."/>
            <person name="Kirby J.R."/>
            <person name="Zhulin I.B."/>
            <person name="Loeffler F.E."/>
            <person name="Richardson P."/>
        </authorList>
    </citation>
    <scope>NUCLEOTIDE SEQUENCE [LARGE SCALE GENOMIC DNA]</scope>
    <source>
        <strain>2CP-C</strain>
    </source>
</reference>
<name>APAG_ANADE</name>